<name>PRIB_ECOHS</name>
<protein>
    <recommendedName>
        <fullName evidence="1">Replication restart protein PriB</fullName>
    </recommendedName>
</protein>
<reference key="1">
    <citation type="journal article" date="2008" name="J. Bacteriol.">
        <title>The pangenome structure of Escherichia coli: comparative genomic analysis of E. coli commensal and pathogenic isolates.</title>
        <authorList>
            <person name="Rasko D.A."/>
            <person name="Rosovitz M.J."/>
            <person name="Myers G.S.A."/>
            <person name="Mongodin E.F."/>
            <person name="Fricke W.F."/>
            <person name="Gajer P."/>
            <person name="Crabtree J."/>
            <person name="Sebaihia M."/>
            <person name="Thomson N.R."/>
            <person name="Chaudhuri R."/>
            <person name="Henderson I.R."/>
            <person name="Sperandio V."/>
            <person name="Ravel J."/>
        </authorList>
    </citation>
    <scope>NUCLEOTIDE SEQUENCE [LARGE SCALE GENOMIC DNA]</scope>
    <source>
        <strain>HS</strain>
    </source>
</reference>
<feature type="chain" id="PRO_1000083274" description="Replication restart protein PriB">
    <location>
        <begin position="1"/>
        <end position="104"/>
    </location>
</feature>
<feature type="domain" description="SSB" evidence="1">
    <location>
        <begin position="1"/>
        <end position="101"/>
    </location>
</feature>
<evidence type="ECO:0000255" key="1">
    <source>
        <dbReference type="HAMAP-Rule" id="MF_00720"/>
    </source>
</evidence>
<proteinExistence type="inferred from homology"/>
<gene>
    <name evidence="1" type="primary">priB</name>
    <name type="ordered locus">EcHS_A4445</name>
</gene>
<sequence>MTNRLVLSGTVCRTPLRKVSPSGIPHCQFVLEHRSVQEEAGFHRQAWCQMPVIVSGHENQAITHSITVGSRITVQGFISCHKAKNGLSKMVLHAEQIELIDSGD</sequence>
<dbReference type="EMBL" id="CP000802">
    <property type="protein sequence ID" value="ABV08601.1"/>
    <property type="molecule type" value="Genomic_DNA"/>
</dbReference>
<dbReference type="RefSeq" id="WP_001296681.1">
    <property type="nucleotide sequence ID" value="NC_009800.1"/>
</dbReference>
<dbReference type="SMR" id="A8A7U7"/>
<dbReference type="GeneID" id="93777622"/>
<dbReference type="KEGG" id="ecx:EcHS_A4445"/>
<dbReference type="HOGENOM" id="CLU_166075_0_0_6"/>
<dbReference type="GO" id="GO:1990077">
    <property type="term" value="C:primosome complex"/>
    <property type="evidence" value="ECO:0007669"/>
    <property type="project" value="UniProtKB-KW"/>
</dbReference>
<dbReference type="GO" id="GO:0003697">
    <property type="term" value="F:single-stranded DNA binding"/>
    <property type="evidence" value="ECO:0007669"/>
    <property type="project" value="UniProtKB-UniRule"/>
</dbReference>
<dbReference type="GO" id="GO:0006269">
    <property type="term" value="P:DNA replication, synthesis of primer"/>
    <property type="evidence" value="ECO:0007669"/>
    <property type="project" value="UniProtKB-KW"/>
</dbReference>
<dbReference type="CDD" id="cd04496">
    <property type="entry name" value="SSB_OBF"/>
    <property type="match status" value="1"/>
</dbReference>
<dbReference type="FunFam" id="2.40.50.140:FF:000077">
    <property type="entry name" value="Primosomal replication protein N"/>
    <property type="match status" value="1"/>
</dbReference>
<dbReference type="Gene3D" id="2.40.50.140">
    <property type="entry name" value="Nucleic acid-binding proteins"/>
    <property type="match status" value="1"/>
</dbReference>
<dbReference type="HAMAP" id="MF_00720">
    <property type="entry name" value="PriB"/>
    <property type="match status" value="1"/>
</dbReference>
<dbReference type="InterPro" id="IPR012340">
    <property type="entry name" value="NA-bd_OB-fold"/>
</dbReference>
<dbReference type="InterPro" id="IPR000424">
    <property type="entry name" value="Primosome_PriB/ssb"/>
</dbReference>
<dbReference type="InterPro" id="IPR023646">
    <property type="entry name" value="Prisomal_replication_PriB"/>
</dbReference>
<dbReference type="NCBIfam" id="TIGR04418">
    <property type="entry name" value="PriB_gamma"/>
    <property type="match status" value="1"/>
</dbReference>
<dbReference type="Pfam" id="PF22657">
    <property type="entry name" value="SSB_1"/>
    <property type="match status" value="1"/>
</dbReference>
<dbReference type="PIRSF" id="PIRSF003135">
    <property type="entry name" value="Primosomal_n"/>
    <property type="match status" value="1"/>
</dbReference>
<dbReference type="SUPFAM" id="SSF50249">
    <property type="entry name" value="Nucleic acid-binding proteins"/>
    <property type="match status" value="1"/>
</dbReference>
<dbReference type="PROSITE" id="PS50935">
    <property type="entry name" value="SSB"/>
    <property type="match status" value="1"/>
</dbReference>
<comment type="function">
    <text evidence="1">Involved in the restart of stalled replication forks, which reloads the replicative helicase on sites other than the origin of replication; the PriA-PriB pathway is the major replication restart pathway. During primosome assembly it facilitates complex formation between PriA and DnaT on DNA; stabilizes PriA on DNA. Stimulates the DNA unwinding activity of PriA helicase.</text>
</comment>
<comment type="subunit">
    <text evidence="1">Homodimer. Interacts with PriA and DnaT. Component of the replication restart primosome. Primosome assembly occurs via a 'hand-off' mechanism. PriA binds to replication forks, subsequently PriB then DnaT bind; DnaT then displaces ssDNA to generate the helicase loading substrate.</text>
</comment>
<comment type="similarity">
    <text evidence="1">Belongs to the PriB family.</text>
</comment>
<accession>A8A7U7</accession>
<organism>
    <name type="scientific">Escherichia coli O9:H4 (strain HS)</name>
    <dbReference type="NCBI Taxonomy" id="331112"/>
    <lineage>
        <taxon>Bacteria</taxon>
        <taxon>Pseudomonadati</taxon>
        <taxon>Pseudomonadota</taxon>
        <taxon>Gammaproteobacteria</taxon>
        <taxon>Enterobacterales</taxon>
        <taxon>Enterobacteriaceae</taxon>
        <taxon>Escherichia</taxon>
    </lineage>
</organism>
<keyword id="KW-0235">DNA replication</keyword>
<keyword id="KW-0238">DNA-binding</keyword>
<keyword id="KW-0639">Primosome</keyword>